<proteinExistence type="evidence at protein level"/>
<evidence type="ECO:0000250" key="1">
    <source>
        <dbReference type="UniProtKB" id="O95336"/>
    </source>
</evidence>
<evidence type="ECO:0000255" key="2"/>
<evidence type="ECO:0000269" key="3">
    <source>
    </source>
</evidence>
<evidence type="ECO:0000269" key="4">
    <source>
    </source>
</evidence>
<evidence type="ECO:0000305" key="5"/>
<evidence type="ECO:0007744" key="6">
    <source>
    </source>
</evidence>
<name>6PGL_RAT</name>
<gene>
    <name evidence="1" type="primary">Pgls</name>
</gene>
<accession>P85971</accession>
<organism>
    <name type="scientific">Rattus norvegicus</name>
    <name type="common">Rat</name>
    <dbReference type="NCBI Taxonomy" id="10116"/>
    <lineage>
        <taxon>Eukaryota</taxon>
        <taxon>Metazoa</taxon>
        <taxon>Chordata</taxon>
        <taxon>Craniata</taxon>
        <taxon>Vertebrata</taxon>
        <taxon>Euteleostomi</taxon>
        <taxon>Mammalia</taxon>
        <taxon>Eutheria</taxon>
        <taxon>Euarchontoglires</taxon>
        <taxon>Glires</taxon>
        <taxon>Rodentia</taxon>
        <taxon>Myomorpha</taxon>
        <taxon>Muroidea</taxon>
        <taxon>Muridae</taxon>
        <taxon>Murinae</taxon>
        <taxon>Rattus</taxon>
    </lineage>
</organism>
<feature type="initiator methionine" description="Removed" evidence="1">
    <location>
        <position position="1"/>
    </location>
</feature>
<feature type="chain" id="PRO_0000349118" description="6-phosphogluconolactonase">
    <location>
        <begin position="2"/>
        <end position="257"/>
    </location>
</feature>
<feature type="modified residue" description="N-acetylalanine" evidence="1">
    <location>
        <position position="2"/>
    </location>
</feature>
<feature type="modified residue" description="Phosphoserine" evidence="6">
    <location>
        <position position="49"/>
    </location>
</feature>
<feature type="modified residue" description="N6-acetyllysine" evidence="1">
    <location>
        <position position="180"/>
    </location>
</feature>
<keyword id="KW-0007">Acetylation</keyword>
<keyword id="KW-0963">Cytoplasm</keyword>
<keyword id="KW-0378">Hydrolase</keyword>
<keyword id="KW-0597">Phosphoprotein</keyword>
<keyword id="KW-1185">Reference proteome</keyword>
<protein>
    <recommendedName>
        <fullName evidence="1">6-phosphogluconolactonase</fullName>
        <shortName evidence="1">6PGL</shortName>
        <ecNumber>3.1.1.31</ecNumber>
    </recommendedName>
</protein>
<sequence>MAAPAPGLISVFSSPQELGASLAQLVAQRAASCLEGNRGRFALGLSGGSLVSMLARDLPAATAPAGPASFARWTLGFCDERLVPFDHAESTYGLYRTHLLSKLPIPDSQVLTIDPALPVEDAAEDYARKLRQAFQGDTVPVFDLLILGVGPDGHTCSLFPGHPLLQEREKIVAPIGDSPKPPPQRVTLTLPVLNAAQSVIFVATGEGKAAVLKRILEDQESALPAAMVQPRTGALCWFLDEAAARLLSVPFEKHSTL</sequence>
<reference evidence="5" key="1">
    <citation type="journal article" date="2004" name="Nature">
        <title>Genome sequence of the Brown Norway rat yields insights into mammalian evolution.</title>
        <authorList>
            <person name="Gibbs R.A."/>
            <person name="Weinstock G.M."/>
            <person name="Metzker M.L."/>
            <person name="Muzny D.M."/>
            <person name="Sodergren E.J."/>
            <person name="Scherer S."/>
            <person name="Scott G."/>
            <person name="Steffen D."/>
            <person name="Worley K.C."/>
            <person name="Burch P.E."/>
            <person name="Okwuonu G."/>
            <person name="Hines S."/>
            <person name="Lewis L."/>
            <person name="Deramo C."/>
            <person name="Delgado O."/>
            <person name="Dugan-Rocha S."/>
            <person name="Miner G."/>
            <person name="Morgan M."/>
            <person name="Hawes A."/>
            <person name="Gill R."/>
            <person name="Holt R.A."/>
            <person name="Adams M.D."/>
            <person name="Amanatides P.G."/>
            <person name="Baden-Tillson H."/>
            <person name="Barnstead M."/>
            <person name="Chin S."/>
            <person name="Evans C.A."/>
            <person name="Ferriera S."/>
            <person name="Fosler C."/>
            <person name="Glodek A."/>
            <person name="Gu Z."/>
            <person name="Jennings D."/>
            <person name="Kraft C.L."/>
            <person name="Nguyen T."/>
            <person name="Pfannkoch C.M."/>
            <person name="Sitter C."/>
            <person name="Sutton G.G."/>
            <person name="Venter J.C."/>
            <person name="Woodage T."/>
            <person name="Smith D."/>
            <person name="Lee H.-M."/>
            <person name="Gustafson E."/>
            <person name="Cahill P."/>
            <person name="Kana A."/>
            <person name="Doucette-Stamm L."/>
            <person name="Weinstock K."/>
            <person name="Fechtel K."/>
            <person name="Weiss R.B."/>
            <person name="Dunn D.M."/>
            <person name="Green E.D."/>
            <person name="Blakesley R.W."/>
            <person name="Bouffard G.G."/>
            <person name="De Jong P.J."/>
            <person name="Osoegawa K."/>
            <person name="Zhu B."/>
            <person name="Marra M."/>
            <person name="Schein J."/>
            <person name="Bosdet I."/>
            <person name="Fjell C."/>
            <person name="Jones S."/>
            <person name="Krzywinski M."/>
            <person name="Mathewson C."/>
            <person name="Siddiqui A."/>
            <person name="Wye N."/>
            <person name="McPherson J."/>
            <person name="Zhao S."/>
            <person name="Fraser C.M."/>
            <person name="Shetty J."/>
            <person name="Shatsman S."/>
            <person name="Geer K."/>
            <person name="Chen Y."/>
            <person name="Abramzon S."/>
            <person name="Nierman W.C."/>
            <person name="Havlak P.H."/>
            <person name="Chen R."/>
            <person name="Durbin K.J."/>
            <person name="Egan A."/>
            <person name="Ren Y."/>
            <person name="Song X.-Z."/>
            <person name="Li B."/>
            <person name="Liu Y."/>
            <person name="Qin X."/>
            <person name="Cawley S."/>
            <person name="Cooney A.J."/>
            <person name="D'Souza L.M."/>
            <person name="Martin K."/>
            <person name="Wu J.Q."/>
            <person name="Gonzalez-Garay M.L."/>
            <person name="Jackson A.R."/>
            <person name="Kalafus K.J."/>
            <person name="McLeod M.P."/>
            <person name="Milosavljevic A."/>
            <person name="Virk D."/>
            <person name="Volkov A."/>
            <person name="Wheeler D.A."/>
            <person name="Zhang Z."/>
            <person name="Bailey J.A."/>
            <person name="Eichler E.E."/>
            <person name="Tuzun E."/>
            <person name="Birney E."/>
            <person name="Mongin E."/>
            <person name="Ureta-Vidal A."/>
            <person name="Woodwark C."/>
            <person name="Zdobnov E."/>
            <person name="Bork P."/>
            <person name="Suyama M."/>
            <person name="Torrents D."/>
            <person name="Alexandersson M."/>
            <person name="Trask B.J."/>
            <person name="Young J.M."/>
            <person name="Huang H."/>
            <person name="Wang H."/>
            <person name="Xing H."/>
            <person name="Daniels S."/>
            <person name="Gietzen D."/>
            <person name="Schmidt J."/>
            <person name="Stevens K."/>
            <person name="Vitt U."/>
            <person name="Wingrove J."/>
            <person name="Camara F."/>
            <person name="Mar Alba M."/>
            <person name="Abril J.F."/>
            <person name="Guigo R."/>
            <person name="Smit A."/>
            <person name="Dubchak I."/>
            <person name="Rubin E.M."/>
            <person name="Couronne O."/>
            <person name="Poliakov A."/>
            <person name="Huebner N."/>
            <person name="Ganten D."/>
            <person name="Goesele C."/>
            <person name="Hummel O."/>
            <person name="Kreitler T."/>
            <person name="Lee Y.-A."/>
            <person name="Monti J."/>
            <person name="Schulz H."/>
            <person name="Zimdahl H."/>
            <person name="Himmelbauer H."/>
            <person name="Lehrach H."/>
            <person name="Jacob H.J."/>
            <person name="Bromberg S."/>
            <person name="Gullings-Handley J."/>
            <person name="Jensen-Seaman M.I."/>
            <person name="Kwitek A.E."/>
            <person name="Lazar J."/>
            <person name="Pasko D."/>
            <person name="Tonellato P.J."/>
            <person name="Twigger S."/>
            <person name="Ponting C.P."/>
            <person name="Duarte J.M."/>
            <person name="Rice S."/>
            <person name="Goodstadt L."/>
            <person name="Beatson S.A."/>
            <person name="Emes R.D."/>
            <person name="Winter E.E."/>
            <person name="Webber C."/>
            <person name="Brandt P."/>
            <person name="Nyakatura G."/>
            <person name="Adetobi M."/>
            <person name="Chiaromonte F."/>
            <person name="Elnitski L."/>
            <person name="Eswara P."/>
            <person name="Hardison R.C."/>
            <person name="Hou M."/>
            <person name="Kolbe D."/>
            <person name="Makova K."/>
            <person name="Miller W."/>
            <person name="Nekrutenko A."/>
            <person name="Riemer C."/>
            <person name="Schwartz S."/>
            <person name="Taylor J."/>
            <person name="Yang S."/>
            <person name="Zhang Y."/>
            <person name="Lindpaintner K."/>
            <person name="Andrews T.D."/>
            <person name="Caccamo M."/>
            <person name="Clamp M."/>
            <person name="Clarke L."/>
            <person name="Curwen V."/>
            <person name="Durbin R.M."/>
            <person name="Eyras E."/>
            <person name="Searle S.M."/>
            <person name="Cooper G.M."/>
            <person name="Batzoglou S."/>
            <person name="Brudno M."/>
            <person name="Sidow A."/>
            <person name="Stone E.A."/>
            <person name="Payseur B.A."/>
            <person name="Bourque G."/>
            <person name="Lopez-Otin C."/>
            <person name="Puente X.S."/>
            <person name="Chakrabarti K."/>
            <person name="Chatterji S."/>
            <person name="Dewey C."/>
            <person name="Pachter L."/>
            <person name="Bray N."/>
            <person name="Yap V.B."/>
            <person name="Caspi A."/>
            <person name="Tesler G."/>
            <person name="Pevzner P.A."/>
            <person name="Haussler D."/>
            <person name="Roskin K.M."/>
            <person name="Baertsch R."/>
            <person name="Clawson H."/>
            <person name="Furey T.S."/>
            <person name="Hinrichs A.S."/>
            <person name="Karolchik D."/>
            <person name="Kent W.J."/>
            <person name="Rosenbloom K.R."/>
            <person name="Trumbower H."/>
            <person name="Weirauch M."/>
            <person name="Cooper D.N."/>
            <person name="Stenson P.D."/>
            <person name="Ma B."/>
            <person name="Brent M."/>
            <person name="Arumugam M."/>
            <person name="Shteynberg D."/>
            <person name="Copley R.R."/>
            <person name="Taylor M.S."/>
            <person name="Riethman H."/>
            <person name="Mudunuri U."/>
            <person name="Peterson J."/>
            <person name="Guyer M."/>
            <person name="Felsenfeld A."/>
            <person name="Old S."/>
            <person name="Mockrin S."/>
            <person name="Collins F.S."/>
        </authorList>
    </citation>
    <scope>NUCLEOTIDE SEQUENCE [LARGE SCALE GENOMIC DNA]</scope>
    <source>
        <strain evidence="3">Brown Norway</strain>
    </source>
</reference>
<reference key="2">
    <citation type="journal article" date="2009" name="Proteomics">
        <title>Proteome profile of the mature rat olfactory bulb.</title>
        <authorList>
            <person name="Maurya D.K."/>
            <person name="Sundaram C.S."/>
            <person name="Bhargava P."/>
        </authorList>
    </citation>
    <scope>IDENTIFICATION BY MASS SPECTROMETRY</scope>
    <scope>SUBCELLULAR LOCATION</scope>
</reference>
<reference key="3">
    <citation type="journal article" date="2012" name="Nat. Commun.">
        <title>Quantitative maps of protein phosphorylation sites across 14 different rat organs and tissues.</title>
        <authorList>
            <person name="Lundby A."/>
            <person name="Secher A."/>
            <person name="Lage K."/>
            <person name="Nordsborg N.B."/>
            <person name="Dmytriyev A."/>
            <person name="Lundby C."/>
            <person name="Olsen J.V."/>
        </authorList>
    </citation>
    <scope>PHOSPHORYLATION [LARGE SCALE ANALYSIS] AT SER-49</scope>
    <scope>IDENTIFICATION BY MASS SPECTROMETRY [LARGE SCALE ANALYSIS]</scope>
</reference>
<comment type="function">
    <text evidence="1">Hydrolysis of 6-phosphogluconolactone to 6-phosphogluconate.</text>
</comment>
<comment type="catalytic activity">
    <reaction evidence="1">
        <text>6-phospho-D-glucono-1,5-lactone + H2O = 6-phospho-D-gluconate + H(+)</text>
        <dbReference type="Rhea" id="RHEA:12556"/>
        <dbReference type="ChEBI" id="CHEBI:15377"/>
        <dbReference type="ChEBI" id="CHEBI:15378"/>
        <dbReference type="ChEBI" id="CHEBI:57955"/>
        <dbReference type="ChEBI" id="CHEBI:58759"/>
        <dbReference type="EC" id="3.1.1.31"/>
    </reaction>
</comment>
<comment type="pathway">
    <text evidence="1">Carbohydrate degradation; pentose phosphate pathway; D-ribulose 5-phosphate from D-glucose 6-phosphate (oxidative stage): step 2/3.</text>
</comment>
<comment type="subcellular location">
    <subcellularLocation>
        <location evidence="4">Cytoplasm</location>
    </subcellularLocation>
</comment>
<comment type="similarity">
    <text evidence="2">Belongs to the glucosamine/galactosamine-6-phosphate isomerase family. 6-phosphogluconolactonase subfamily.</text>
</comment>
<dbReference type="EC" id="3.1.1.31"/>
<dbReference type="EMBL" id="AABR03100626">
    <property type="status" value="NOT_ANNOTATED_CDS"/>
    <property type="molecule type" value="Genomic_DNA"/>
</dbReference>
<dbReference type="SMR" id="P85971"/>
<dbReference type="FunCoup" id="P85971">
    <property type="interactions" value="2069"/>
</dbReference>
<dbReference type="STRING" id="10116.ENSRNOP00000024827"/>
<dbReference type="iPTMnet" id="P85971"/>
<dbReference type="PhosphoSitePlus" id="P85971"/>
<dbReference type="SwissPalm" id="P85971"/>
<dbReference type="jPOST" id="P85971"/>
<dbReference type="PaxDb" id="10116-ENSRNOP00000024827"/>
<dbReference type="UCSC" id="RGD:1307001">
    <property type="organism name" value="rat"/>
</dbReference>
<dbReference type="AGR" id="RGD:1307001"/>
<dbReference type="RGD" id="1307001">
    <property type="gene designation" value="Pgls"/>
</dbReference>
<dbReference type="eggNOG" id="KOG3147">
    <property type="taxonomic scope" value="Eukaryota"/>
</dbReference>
<dbReference type="InParanoid" id="P85971"/>
<dbReference type="OrthoDB" id="432544at2759"/>
<dbReference type="PhylomeDB" id="P85971"/>
<dbReference type="Reactome" id="R-RNO-71336">
    <property type="pathway name" value="Pentose phosphate pathway"/>
</dbReference>
<dbReference type="UniPathway" id="UPA00115">
    <property type="reaction ID" value="UER00409"/>
</dbReference>
<dbReference type="PRO" id="PR:P85971"/>
<dbReference type="Proteomes" id="UP000002494">
    <property type="component" value="Unplaced"/>
</dbReference>
<dbReference type="GO" id="GO:0005829">
    <property type="term" value="C:cytosol"/>
    <property type="evidence" value="ECO:0000318"/>
    <property type="project" value="GO_Central"/>
</dbReference>
<dbReference type="GO" id="GO:0017057">
    <property type="term" value="F:6-phosphogluconolactonase activity"/>
    <property type="evidence" value="ECO:0000314"/>
    <property type="project" value="RGD"/>
</dbReference>
<dbReference type="GO" id="GO:0048029">
    <property type="term" value="F:monosaccharide binding"/>
    <property type="evidence" value="ECO:0000314"/>
    <property type="project" value="RGD"/>
</dbReference>
<dbReference type="GO" id="GO:0005975">
    <property type="term" value="P:carbohydrate metabolic process"/>
    <property type="evidence" value="ECO:0007669"/>
    <property type="project" value="InterPro"/>
</dbReference>
<dbReference type="GO" id="GO:0006098">
    <property type="term" value="P:pentose-phosphate shunt"/>
    <property type="evidence" value="ECO:0000266"/>
    <property type="project" value="RGD"/>
</dbReference>
<dbReference type="GO" id="GO:0009051">
    <property type="term" value="P:pentose-phosphate shunt, oxidative branch"/>
    <property type="evidence" value="ECO:0000314"/>
    <property type="project" value="RGD"/>
</dbReference>
<dbReference type="CDD" id="cd01400">
    <property type="entry name" value="6PGL"/>
    <property type="match status" value="1"/>
</dbReference>
<dbReference type="FunFam" id="3.40.50.1360:FF:000005">
    <property type="entry name" value="6-phosphogluconolactonase"/>
    <property type="match status" value="1"/>
</dbReference>
<dbReference type="Gene3D" id="3.40.50.1360">
    <property type="match status" value="1"/>
</dbReference>
<dbReference type="InterPro" id="IPR005900">
    <property type="entry name" value="6-phosphogluconolactonase_DevB"/>
</dbReference>
<dbReference type="InterPro" id="IPR006148">
    <property type="entry name" value="Glc/Gal-6P_isomerase"/>
</dbReference>
<dbReference type="InterPro" id="IPR037171">
    <property type="entry name" value="NagB/RpiA_transferase-like"/>
</dbReference>
<dbReference type="InterPro" id="IPR039104">
    <property type="entry name" value="PGLS"/>
</dbReference>
<dbReference type="NCBIfam" id="TIGR01198">
    <property type="entry name" value="pgl"/>
    <property type="match status" value="1"/>
</dbReference>
<dbReference type="PANTHER" id="PTHR11054">
    <property type="entry name" value="6-PHOSPHOGLUCONOLACTONASE"/>
    <property type="match status" value="1"/>
</dbReference>
<dbReference type="PANTHER" id="PTHR11054:SF0">
    <property type="entry name" value="6-PHOSPHOGLUCONOLACTONASE"/>
    <property type="match status" value="1"/>
</dbReference>
<dbReference type="Pfam" id="PF01182">
    <property type="entry name" value="Glucosamine_iso"/>
    <property type="match status" value="1"/>
</dbReference>
<dbReference type="SUPFAM" id="SSF100950">
    <property type="entry name" value="NagB/RpiA/CoA transferase-like"/>
    <property type="match status" value="1"/>
</dbReference>